<proteinExistence type="evidence at transcript level"/>
<accession>P62976</accession>
<accession>P02248</accession>
<accession>P02249</accession>
<accession>P02250</accession>
<accession>Q29120</accession>
<accession>Q60507</accession>
<accession>Q91887</accession>
<accession>Q91888</accession>
<dbReference type="EMBL" id="D63782">
    <property type="protein sequence ID" value="BAA09853.1"/>
    <property type="molecule type" value="Genomic_DNA"/>
</dbReference>
<dbReference type="EMBL" id="X08013">
    <property type="protein sequence ID" value="CAA30815.1"/>
    <property type="molecule type" value="mRNA"/>
</dbReference>
<dbReference type="EMBL" id="X60390">
    <property type="protein sequence ID" value="CAA42941.1"/>
    <property type="molecule type" value="Genomic_DNA"/>
</dbReference>
<dbReference type="PIR" id="S42750">
    <property type="entry name" value="S42750"/>
</dbReference>
<dbReference type="RefSeq" id="NP_001231310.1">
    <property type="nucleotide sequence ID" value="NM_001244381.1"/>
</dbReference>
<dbReference type="SMR" id="P62976"/>
<dbReference type="IntAct" id="P62976">
    <property type="interactions" value="1"/>
</dbReference>
<dbReference type="PaxDb" id="10029-NP_001231307.1"/>
<dbReference type="GeneID" id="100689268"/>
<dbReference type="KEGG" id="cge:100689268"/>
<dbReference type="CTD" id="7314"/>
<dbReference type="eggNOG" id="KOG0001">
    <property type="taxonomic scope" value="Eukaryota"/>
</dbReference>
<dbReference type="OrthoDB" id="428577at2759"/>
<dbReference type="Proteomes" id="UP000694386">
    <property type="component" value="Unplaced"/>
</dbReference>
<dbReference type="Proteomes" id="UP001108280">
    <property type="component" value="Chromosome 7"/>
</dbReference>
<dbReference type="GO" id="GO:0005737">
    <property type="term" value="C:cytoplasm"/>
    <property type="evidence" value="ECO:0007669"/>
    <property type="project" value="UniProtKB-SubCell"/>
</dbReference>
<dbReference type="GO" id="GO:0005634">
    <property type="term" value="C:nucleus"/>
    <property type="evidence" value="ECO:0007669"/>
    <property type="project" value="UniProtKB-SubCell"/>
</dbReference>
<dbReference type="CDD" id="cd01803">
    <property type="entry name" value="Ubl_ubiquitin"/>
    <property type="match status" value="8"/>
</dbReference>
<dbReference type="FunFam" id="3.10.20.90:FF:000158">
    <property type="entry name" value="Polyubiquitin 5"/>
    <property type="match status" value="8"/>
</dbReference>
<dbReference type="FunFam" id="3.10.20.90:FF:000469">
    <property type="entry name" value="Polyubiquitin-C"/>
    <property type="match status" value="1"/>
</dbReference>
<dbReference type="Gene3D" id="3.10.20.90">
    <property type="entry name" value="Phosphatidylinositol 3-kinase Catalytic Subunit, Chain A, domain 1"/>
    <property type="match status" value="9"/>
</dbReference>
<dbReference type="InterPro" id="IPR000626">
    <property type="entry name" value="Ubiquitin-like_dom"/>
</dbReference>
<dbReference type="InterPro" id="IPR029071">
    <property type="entry name" value="Ubiquitin-like_domsf"/>
</dbReference>
<dbReference type="InterPro" id="IPR019954">
    <property type="entry name" value="Ubiquitin_CS"/>
</dbReference>
<dbReference type="InterPro" id="IPR019956">
    <property type="entry name" value="Ubiquitin_dom"/>
</dbReference>
<dbReference type="InterPro" id="IPR050158">
    <property type="entry name" value="Ubiquitin_ubiquitin-like"/>
</dbReference>
<dbReference type="PANTHER" id="PTHR10666">
    <property type="entry name" value="UBIQUITIN"/>
    <property type="match status" value="1"/>
</dbReference>
<dbReference type="Pfam" id="PF00240">
    <property type="entry name" value="ubiquitin"/>
    <property type="match status" value="8"/>
</dbReference>
<dbReference type="PRINTS" id="PR00348">
    <property type="entry name" value="UBIQUITIN"/>
</dbReference>
<dbReference type="SMART" id="SM00213">
    <property type="entry name" value="UBQ"/>
    <property type="match status" value="8"/>
</dbReference>
<dbReference type="SUPFAM" id="SSF54236">
    <property type="entry name" value="Ubiquitin-like"/>
    <property type="match status" value="9"/>
</dbReference>
<dbReference type="PROSITE" id="PS00299">
    <property type="entry name" value="UBIQUITIN_1"/>
    <property type="match status" value="8"/>
</dbReference>
<dbReference type="PROSITE" id="PS50053">
    <property type="entry name" value="UBIQUITIN_2"/>
    <property type="match status" value="8"/>
</dbReference>
<organism>
    <name type="scientific">Cricetulus griseus</name>
    <name type="common">Chinese hamster</name>
    <name type="synonym">Cricetulus barabensis griseus</name>
    <dbReference type="NCBI Taxonomy" id="10029"/>
    <lineage>
        <taxon>Eukaryota</taxon>
        <taxon>Metazoa</taxon>
        <taxon>Chordata</taxon>
        <taxon>Craniata</taxon>
        <taxon>Vertebrata</taxon>
        <taxon>Euteleostomi</taxon>
        <taxon>Mammalia</taxon>
        <taxon>Eutheria</taxon>
        <taxon>Euarchontoglires</taxon>
        <taxon>Glires</taxon>
        <taxon>Rodentia</taxon>
        <taxon>Myomorpha</taxon>
        <taxon>Muroidea</taxon>
        <taxon>Cricetidae</taxon>
        <taxon>Cricetinae</taxon>
        <taxon>Cricetulus</taxon>
    </lineage>
</organism>
<name>UBIQP_CRIGR</name>
<evidence type="ECO:0000250" key="1"/>
<evidence type="ECO:0000250" key="2">
    <source>
        <dbReference type="UniProtKB" id="P0CG48"/>
    </source>
</evidence>
<evidence type="ECO:0000250" key="3">
    <source>
        <dbReference type="UniProtKB" id="P0CH28"/>
    </source>
</evidence>
<evidence type="ECO:0000255" key="4">
    <source>
        <dbReference type="PROSITE-ProRule" id="PRU00214"/>
    </source>
</evidence>
<evidence type="ECO:0000305" key="5"/>
<feature type="chain" id="PRO_0000114796" description="Ubiquitin">
    <location>
        <begin position="1"/>
        <end position="76"/>
    </location>
</feature>
<feature type="chain" id="PRO_0000396252" description="Ubiquitin">
    <location>
        <begin position="77"/>
        <end position="152"/>
    </location>
</feature>
<feature type="chain" id="PRO_0000396253" description="Ubiquitin">
    <location>
        <begin position="153"/>
        <end position="228"/>
    </location>
</feature>
<feature type="chain" id="PRO_0000396254" description="Ubiquitin">
    <location>
        <begin position="229"/>
        <end position="304"/>
    </location>
</feature>
<feature type="chain" id="PRO_0000396255" description="Ubiquitin">
    <location>
        <begin position="305"/>
        <end position="380"/>
    </location>
</feature>
<feature type="chain" id="PRO_0000396256" description="Ubiquitin">
    <location>
        <begin position="381"/>
        <end position="456"/>
    </location>
</feature>
<feature type="chain" id="PRO_0000396257" description="Ubiquitin">
    <location>
        <begin position="457"/>
        <end position="532"/>
    </location>
</feature>
<feature type="chain" id="PRO_0000396258" description="Ubiquitin-related 1">
    <location>
        <begin position="533"/>
        <end position="608"/>
    </location>
</feature>
<feature type="chain" id="PRO_0000396259" description="Ubiquitin-related 2">
    <location>
        <begin position="609"/>
        <end position="658"/>
    </location>
</feature>
<feature type="domain" description="Ubiquitin-like 1" evidence="4">
    <location>
        <begin position="1"/>
        <end position="76"/>
    </location>
</feature>
<feature type="domain" description="Ubiquitin-like 2" evidence="4">
    <location>
        <begin position="77"/>
        <end position="152"/>
    </location>
</feature>
<feature type="domain" description="Ubiquitin-like 3" evidence="4">
    <location>
        <begin position="153"/>
        <end position="228"/>
    </location>
</feature>
<feature type="domain" description="Ubiquitin-like 4" evidence="4">
    <location>
        <begin position="229"/>
        <end position="304"/>
    </location>
</feature>
<feature type="domain" description="Ubiquitin-like 5" evidence="4">
    <location>
        <begin position="305"/>
        <end position="380"/>
    </location>
</feature>
<feature type="domain" description="Ubiquitin-like 6" evidence="4">
    <location>
        <begin position="381"/>
        <end position="456"/>
    </location>
</feature>
<feature type="domain" description="Ubiquitin-like 7" evidence="4">
    <location>
        <begin position="457"/>
        <end position="532"/>
    </location>
</feature>
<feature type="domain" description="Ubiquitin-like 8" evidence="4">
    <location>
        <begin position="533"/>
        <end position="608"/>
    </location>
</feature>
<feature type="site" description="Interacts with activating enzyme">
    <location>
        <position position="54"/>
    </location>
</feature>
<feature type="site" description="Essential for function">
    <location>
        <position position="68"/>
    </location>
</feature>
<feature type="site" description="Interacts with activating enzyme">
    <location>
        <position position="72"/>
    </location>
</feature>
<feature type="modified residue" description="Phosphoserine" evidence="2">
    <location>
        <position position="65"/>
    </location>
</feature>
<feature type="cross-link" description="Glycyl lysine isopeptide (Lys-Gly) (interchain with G-Cter in ubiquitin)" evidence="2">
    <location>
        <position position="6"/>
    </location>
</feature>
<feature type="cross-link" description="Glycyl lysine isopeptide (Lys-Gly) (interchain with G-Cter in ubiquitin)" evidence="2">
    <location>
        <position position="11"/>
    </location>
</feature>
<feature type="cross-link" description="Glycyl lysine isopeptide (Lys-Gly) (interchain with G-Cter in ubiquitin)" evidence="2">
    <location>
        <position position="27"/>
    </location>
</feature>
<feature type="cross-link" description="Glycyl lysine isopeptide (Lys-Gly) (interchain with G-Cter in ubiquitin)" evidence="2">
    <location>
        <position position="29"/>
    </location>
</feature>
<feature type="cross-link" description="Glycyl lysine isopeptide (Lys-Gly) (interchain with G-Cter in ubiquitin)" evidence="2">
    <location>
        <position position="33"/>
    </location>
</feature>
<feature type="cross-link" description="Glycyl lysine isopeptide (Lys-Gly) (interchain with G-Cter in ubiquitin)" evidence="3">
    <location>
        <position position="48"/>
    </location>
</feature>
<feature type="cross-link" description="Glycyl lysine isopeptide (Lys-Gly) (interchain with G-Cter in ubiquitin)" evidence="2">
    <location>
        <position position="63"/>
    </location>
</feature>
<feature type="cross-link" description="Glycyl lysine isopeptide (Gly-Lys) (interchain with K-? in acceptor proteins)" evidence="4">
    <location>
        <position position="76"/>
    </location>
</feature>
<feature type="sequence conflict" description="In Ref. 3; CAA42941." evidence="5" ref="3">
    <original>M</original>
    <variation>Y</variation>
    <location>
        <position position="381"/>
    </location>
</feature>
<keyword id="KW-0963">Cytoplasm</keyword>
<keyword id="KW-1017">Isopeptide bond</keyword>
<keyword id="KW-0539">Nucleus</keyword>
<keyword id="KW-0597">Phosphoprotein</keyword>
<keyword id="KW-0677">Repeat</keyword>
<keyword id="KW-0832">Ubl conjugation</keyword>
<sequence length="658" mass="73950">MQIFVKTLTGKTITLEVEPSDTIENVKAKIQDKEGIPPDQQRLIFAGKQLEDGRTLSDYNIQKESTLHLVLRLRGGMQIFVKTLTGKTITLEVEPSDTIENVKAKIQDKEGIPPDQQRLIFAGKQLEDGRTLSDYNIQKESTLHLVLRLRGGMQIFVKTLTGKTITLEVEPSDTIENVKAKIQDKEGIPPDQQRLIFAGKQLEDGRTLSDYNIQKESTLHLVLRLRGGMQIFVKTLTGKTITLEVEPSDTIENVKAKIQDKEGIPPDQQRLIFAGKQLEDGRTLSDYNIQKESTLHLVLRLRGGMQIFVKTLTGKTITLEVEPSDTIENVKAKIQDKEGIPPDQQRLIFAGKQLEDGRTLSDYNIQKESTLHLVLRLRGGMQIFVKTLTGKTITLEVEPSDTIENVKAKIQDKEGIPPDQQRLIFAGKQLEDGRTLSDYNIQKESTLHLVLRLRGGMQIFVKTLTGKTITLEVEPSDTIENVKAKIQDKEGIPPDQQRLIFAGKQLEDGRTLSDYNIQKESTLHLVLRLRGGMQIFVKTLTGKTITLEVEPSDTIENVKAKIQDKQGIPPDQQRLIFAGKQLEDGRTLSDYNIQKESTLHLVLRLRGGMQIFVKTLTGKTITLEVEPSNTIKKSKQEDGRTFLTTLSRKSTPCACSWA</sequence>
<protein>
    <recommendedName>
        <fullName>Polyubiquitin</fullName>
    </recommendedName>
    <component>
        <recommendedName>
            <fullName>Ubiquitin</fullName>
        </recommendedName>
    </component>
    <component>
        <recommendedName>
            <fullName>Ubiquitin-related 1</fullName>
        </recommendedName>
    </component>
    <component>
        <recommendedName>
            <fullName>Ubiquitin-related 2</fullName>
        </recommendedName>
    </component>
</protein>
<reference key="1">
    <citation type="journal article" date="1994" name="Biochim. Biophys. Acta">
        <title>Novel structure of a Chinese hamster polyubiquitin gene.</title>
        <authorList>
            <person name="Nenoi M."/>
            <person name="Mita K."/>
            <person name="Ichimura S."/>
            <person name="Cartwright I.L."/>
        </authorList>
    </citation>
    <scope>NUCLEOTIDE SEQUENCE [GENOMIC DNA]</scope>
    <source>
        <tissue>Lung fibroblast</tissue>
    </source>
</reference>
<reference key="2">
    <citation type="journal article" date="1989" name="Nucleic Acids Res.">
        <title>Ubiquitin mRNA is a major stress-induced transcript in mammalian cells.</title>
        <authorList>
            <person name="Fornace A.J. Jr."/>
            <person name="Alamo I. Jr."/>
            <person name="Hollander M.C."/>
            <person name="Lamoreaux E."/>
        </authorList>
    </citation>
    <scope>NUCLEOTIDE SEQUENCE [MRNA] OF 1-223</scope>
    <source>
        <tissue>Lung fibroblast</tissue>
    </source>
</reference>
<reference key="3">
    <citation type="journal article" date="1992" name="Biochim. Biophys. Acta">
        <title>Evolutionarily conserved structure of the 3' non-translated region of a Chinese hamster polyubiquitin gene.</title>
        <authorList>
            <person name="Nenoi M."/>
            <person name="Mita K."/>
            <person name="Ichimura S."/>
        </authorList>
    </citation>
    <scope>NUCLEOTIDE SEQUENCE [GENOMIC DNA] OF 1-381</scope>
    <source>
        <tissue>Lung fibroblast</tissue>
    </source>
</reference>
<comment type="function">
    <text evidence="1">Ubiquitin Exists either covalently attached to another protein, or free (unanchored). When covalently bound, it is conjugated to target proteins via an isopeptide bond either as a monomer (monoubiquitin), a polymer linked via different Lys residues of the ubiquitin (polyubiquitin chains) or a linear polymer linked via the initiator Met of the ubiquitin (linear polyubiquitin chains). Polyubiquitin chains, when attached to a target protein, have different functions depending on the Lys residue of the ubiquitin that is linked: Lys-6-linked may be involved in DNA repair; Lys-11-linked is involved in ERAD (endoplasmic reticulum-associated degradation) and in cell-cycle regulation; Lys-29-linked is involved in proteotoxic stress response and cell cycle; Lys-33-linked is involved in kinase modification; Lys-48-linked is involved in protein degradation via the proteasome; Lys-63-linked is involved in endocytosis, DNA-damage responses as well as in signaling processes leading to activation of the transcription factor NF-kappa-B. Linear polymer chains formed via attachment by the initiator Met lead to cell signaling. Ubiquitin is usually conjugated to Lys residues of target proteins, however, in rare cases, conjugation to Cys or Ser residues has been observed. When polyubiquitin is free (unanchored-polyubiquitin), it also has distinct roles, such as in activation of protein kinases, and in signaling (By similarity).</text>
</comment>
<comment type="subcellular location">
    <subcellularLocation>
        <location evidence="1">Cytoplasm</location>
    </subcellularLocation>
    <subcellularLocation>
        <location evidence="1">Nucleus</location>
    </subcellularLocation>
</comment>
<comment type="miscellaneous">
    <text>For the sake of clarity sequence features are annotated only for the first chain, and are not repeated for each of the following chains.</text>
</comment>
<comment type="similarity">
    <text evidence="5">Belongs to the ubiquitin family.</text>
</comment>